<protein>
    <recommendedName>
        <fullName>Synaptotagmin-like protein 4</fullName>
    </recommendedName>
    <alternativeName>
        <fullName>Exophilin-2</fullName>
    </alternativeName>
    <alternativeName>
        <fullName>Granuphilin</fullName>
    </alternativeName>
</protein>
<reference key="1">
    <citation type="journal article" date="2004" name="Nat. Genet.">
        <title>Complete sequencing and characterization of 21,243 full-length human cDNAs.</title>
        <authorList>
            <person name="Ota T."/>
            <person name="Suzuki Y."/>
            <person name="Nishikawa T."/>
            <person name="Otsuki T."/>
            <person name="Sugiyama T."/>
            <person name="Irie R."/>
            <person name="Wakamatsu A."/>
            <person name="Hayashi K."/>
            <person name="Sato H."/>
            <person name="Nagai K."/>
            <person name="Kimura K."/>
            <person name="Makita H."/>
            <person name="Sekine M."/>
            <person name="Obayashi M."/>
            <person name="Nishi T."/>
            <person name="Shibahara T."/>
            <person name="Tanaka T."/>
            <person name="Ishii S."/>
            <person name="Yamamoto J."/>
            <person name="Saito K."/>
            <person name="Kawai Y."/>
            <person name="Isono Y."/>
            <person name="Nakamura Y."/>
            <person name="Nagahari K."/>
            <person name="Murakami K."/>
            <person name="Yasuda T."/>
            <person name="Iwayanagi T."/>
            <person name="Wagatsuma M."/>
            <person name="Shiratori A."/>
            <person name="Sudo H."/>
            <person name="Hosoiri T."/>
            <person name="Kaku Y."/>
            <person name="Kodaira H."/>
            <person name="Kondo H."/>
            <person name="Sugawara M."/>
            <person name="Takahashi M."/>
            <person name="Kanda K."/>
            <person name="Yokoi T."/>
            <person name="Furuya T."/>
            <person name="Kikkawa E."/>
            <person name="Omura Y."/>
            <person name="Abe K."/>
            <person name="Kamihara K."/>
            <person name="Katsuta N."/>
            <person name="Sato K."/>
            <person name="Tanikawa M."/>
            <person name="Yamazaki M."/>
            <person name="Ninomiya K."/>
            <person name="Ishibashi T."/>
            <person name="Yamashita H."/>
            <person name="Murakawa K."/>
            <person name="Fujimori K."/>
            <person name="Tanai H."/>
            <person name="Kimata M."/>
            <person name="Watanabe M."/>
            <person name="Hiraoka S."/>
            <person name="Chiba Y."/>
            <person name="Ishida S."/>
            <person name="Ono Y."/>
            <person name="Takiguchi S."/>
            <person name="Watanabe S."/>
            <person name="Yosida M."/>
            <person name="Hotuta T."/>
            <person name="Kusano J."/>
            <person name="Kanehori K."/>
            <person name="Takahashi-Fujii A."/>
            <person name="Hara H."/>
            <person name="Tanase T.-O."/>
            <person name="Nomura Y."/>
            <person name="Togiya S."/>
            <person name="Komai F."/>
            <person name="Hara R."/>
            <person name="Takeuchi K."/>
            <person name="Arita M."/>
            <person name="Imose N."/>
            <person name="Musashino K."/>
            <person name="Yuuki H."/>
            <person name="Oshima A."/>
            <person name="Sasaki N."/>
            <person name="Aotsuka S."/>
            <person name="Yoshikawa Y."/>
            <person name="Matsunawa H."/>
            <person name="Ichihara T."/>
            <person name="Shiohata N."/>
            <person name="Sano S."/>
            <person name="Moriya S."/>
            <person name="Momiyama H."/>
            <person name="Satoh N."/>
            <person name="Takami S."/>
            <person name="Terashima Y."/>
            <person name="Suzuki O."/>
            <person name="Nakagawa S."/>
            <person name="Senoh A."/>
            <person name="Mizoguchi H."/>
            <person name="Goto Y."/>
            <person name="Shimizu F."/>
            <person name="Wakebe H."/>
            <person name="Hishigaki H."/>
            <person name="Watanabe T."/>
            <person name="Sugiyama A."/>
            <person name="Takemoto M."/>
            <person name="Kawakami B."/>
            <person name="Yamazaki M."/>
            <person name="Watanabe K."/>
            <person name="Kumagai A."/>
            <person name="Itakura S."/>
            <person name="Fukuzumi Y."/>
            <person name="Fujimori Y."/>
            <person name="Komiyama M."/>
            <person name="Tashiro H."/>
            <person name="Tanigami A."/>
            <person name="Fujiwara T."/>
            <person name="Ono T."/>
            <person name="Yamada K."/>
            <person name="Fujii Y."/>
            <person name="Ozaki K."/>
            <person name="Hirao M."/>
            <person name="Ohmori Y."/>
            <person name="Kawabata A."/>
            <person name="Hikiji T."/>
            <person name="Kobatake N."/>
            <person name="Inagaki H."/>
            <person name="Ikema Y."/>
            <person name="Okamoto S."/>
            <person name="Okitani R."/>
            <person name="Kawakami T."/>
            <person name="Noguchi S."/>
            <person name="Itoh T."/>
            <person name="Shigeta K."/>
            <person name="Senba T."/>
            <person name="Matsumura K."/>
            <person name="Nakajima Y."/>
            <person name="Mizuno T."/>
            <person name="Morinaga M."/>
            <person name="Sasaki M."/>
            <person name="Togashi T."/>
            <person name="Oyama M."/>
            <person name="Hata H."/>
            <person name="Watanabe M."/>
            <person name="Komatsu T."/>
            <person name="Mizushima-Sugano J."/>
            <person name="Satoh T."/>
            <person name="Shirai Y."/>
            <person name="Takahashi Y."/>
            <person name="Nakagawa K."/>
            <person name="Okumura K."/>
            <person name="Nagase T."/>
            <person name="Nomura N."/>
            <person name="Kikuchi H."/>
            <person name="Masuho Y."/>
            <person name="Yamashita R."/>
            <person name="Nakai K."/>
            <person name="Yada T."/>
            <person name="Nakamura Y."/>
            <person name="Ohara O."/>
            <person name="Isogai T."/>
            <person name="Sugano S."/>
        </authorList>
    </citation>
    <scope>NUCLEOTIDE SEQUENCE [LARGE SCALE MRNA] (ISOFORM 1)</scope>
    <scope>VARIANT VAL-420</scope>
    <source>
        <tissue>Adrenal gland</tissue>
    </source>
</reference>
<reference key="2">
    <citation type="journal article" date="2007" name="BMC Genomics">
        <title>The full-ORF clone resource of the German cDNA consortium.</title>
        <authorList>
            <person name="Bechtel S."/>
            <person name="Rosenfelder H."/>
            <person name="Duda A."/>
            <person name="Schmidt C.P."/>
            <person name="Ernst U."/>
            <person name="Wellenreuther R."/>
            <person name="Mehrle A."/>
            <person name="Schuster C."/>
            <person name="Bahr A."/>
            <person name="Bloecker H."/>
            <person name="Heubner D."/>
            <person name="Hoerlein A."/>
            <person name="Michel G."/>
            <person name="Wedler H."/>
            <person name="Koehrer K."/>
            <person name="Ottenwaelder B."/>
            <person name="Poustka A."/>
            <person name="Wiemann S."/>
            <person name="Schupp I."/>
        </authorList>
    </citation>
    <scope>NUCLEOTIDE SEQUENCE [LARGE SCALE MRNA] (ISOFORMS 1 AND 2)</scope>
    <scope>VARIANT VAL-420</scope>
    <source>
        <tissue>Endometrium</tissue>
        <tissue>Spinal cord</tissue>
    </source>
</reference>
<reference key="3">
    <citation type="journal article" date="2005" name="Nature">
        <title>The DNA sequence of the human X chromosome.</title>
        <authorList>
            <person name="Ross M.T."/>
            <person name="Grafham D.V."/>
            <person name="Coffey A.J."/>
            <person name="Scherer S."/>
            <person name="McLay K."/>
            <person name="Muzny D."/>
            <person name="Platzer M."/>
            <person name="Howell G.R."/>
            <person name="Burrows C."/>
            <person name="Bird C.P."/>
            <person name="Frankish A."/>
            <person name="Lovell F.L."/>
            <person name="Howe K.L."/>
            <person name="Ashurst J.L."/>
            <person name="Fulton R.S."/>
            <person name="Sudbrak R."/>
            <person name="Wen G."/>
            <person name="Jones M.C."/>
            <person name="Hurles M.E."/>
            <person name="Andrews T.D."/>
            <person name="Scott C.E."/>
            <person name="Searle S."/>
            <person name="Ramser J."/>
            <person name="Whittaker A."/>
            <person name="Deadman R."/>
            <person name="Carter N.P."/>
            <person name="Hunt S.E."/>
            <person name="Chen R."/>
            <person name="Cree A."/>
            <person name="Gunaratne P."/>
            <person name="Havlak P."/>
            <person name="Hodgson A."/>
            <person name="Metzker M.L."/>
            <person name="Richards S."/>
            <person name="Scott G."/>
            <person name="Steffen D."/>
            <person name="Sodergren E."/>
            <person name="Wheeler D.A."/>
            <person name="Worley K.C."/>
            <person name="Ainscough R."/>
            <person name="Ambrose K.D."/>
            <person name="Ansari-Lari M.A."/>
            <person name="Aradhya S."/>
            <person name="Ashwell R.I."/>
            <person name="Babbage A.K."/>
            <person name="Bagguley C.L."/>
            <person name="Ballabio A."/>
            <person name="Banerjee R."/>
            <person name="Barker G.E."/>
            <person name="Barlow K.F."/>
            <person name="Barrett I.P."/>
            <person name="Bates K.N."/>
            <person name="Beare D.M."/>
            <person name="Beasley H."/>
            <person name="Beasley O."/>
            <person name="Beck A."/>
            <person name="Bethel G."/>
            <person name="Blechschmidt K."/>
            <person name="Brady N."/>
            <person name="Bray-Allen S."/>
            <person name="Bridgeman A.M."/>
            <person name="Brown A.J."/>
            <person name="Brown M.J."/>
            <person name="Bonnin D."/>
            <person name="Bruford E.A."/>
            <person name="Buhay C."/>
            <person name="Burch P."/>
            <person name="Burford D."/>
            <person name="Burgess J."/>
            <person name="Burrill W."/>
            <person name="Burton J."/>
            <person name="Bye J.M."/>
            <person name="Carder C."/>
            <person name="Carrel L."/>
            <person name="Chako J."/>
            <person name="Chapman J.C."/>
            <person name="Chavez D."/>
            <person name="Chen E."/>
            <person name="Chen G."/>
            <person name="Chen Y."/>
            <person name="Chen Z."/>
            <person name="Chinault C."/>
            <person name="Ciccodicola A."/>
            <person name="Clark S.Y."/>
            <person name="Clarke G."/>
            <person name="Clee C.M."/>
            <person name="Clegg S."/>
            <person name="Clerc-Blankenburg K."/>
            <person name="Clifford K."/>
            <person name="Cobley V."/>
            <person name="Cole C.G."/>
            <person name="Conquer J.S."/>
            <person name="Corby N."/>
            <person name="Connor R.E."/>
            <person name="David R."/>
            <person name="Davies J."/>
            <person name="Davis C."/>
            <person name="Davis J."/>
            <person name="Delgado O."/>
            <person name="Deshazo D."/>
            <person name="Dhami P."/>
            <person name="Ding Y."/>
            <person name="Dinh H."/>
            <person name="Dodsworth S."/>
            <person name="Draper H."/>
            <person name="Dugan-Rocha S."/>
            <person name="Dunham A."/>
            <person name="Dunn M."/>
            <person name="Durbin K.J."/>
            <person name="Dutta I."/>
            <person name="Eades T."/>
            <person name="Ellwood M."/>
            <person name="Emery-Cohen A."/>
            <person name="Errington H."/>
            <person name="Evans K.L."/>
            <person name="Faulkner L."/>
            <person name="Francis F."/>
            <person name="Frankland J."/>
            <person name="Fraser A.E."/>
            <person name="Galgoczy P."/>
            <person name="Gilbert J."/>
            <person name="Gill R."/>
            <person name="Gloeckner G."/>
            <person name="Gregory S.G."/>
            <person name="Gribble S."/>
            <person name="Griffiths C."/>
            <person name="Grocock R."/>
            <person name="Gu Y."/>
            <person name="Gwilliam R."/>
            <person name="Hamilton C."/>
            <person name="Hart E.A."/>
            <person name="Hawes A."/>
            <person name="Heath P.D."/>
            <person name="Heitmann K."/>
            <person name="Hennig S."/>
            <person name="Hernandez J."/>
            <person name="Hinzmann B."/>
            <person name="Ho S."/>
            <person name="Hoffs M."/>
            <person name="Howden P.J."/>
            <person name="Huckle E.J."/>
            <person name="Hume J."/>
            <person name="Hunt P.J."/>
            <person name="Hunt A.R."/>
            <person name="Isherwood J."/>
            <person name="Jacob L."/>
            <person name="Johnson D."/>
            <person name="Jones S."/>
            <person name="de Jong P.J."/>
            <person name="Joseph S.S."/>
            <person name="Keenan S."/>
            <person name="Kelly S."/>
            <person name="Kershaw J.K."/>
            <person name="Khan Z."/>
            <person name="Kioschis P."/>
            <person name="Klages S."/>
            <person name="Knights A.J."/>
            <person name="Kosiura A."/>
            <person name="Kovar-Smith C."/>
            <person name="Laird G.K."/>
            <person name="Langford C."/>
            <person name="Lawlor S."/>
            <person name="Leversha M."/>
            <person name="Lewis L."/>
            <person name="Liu W."/>
            <person name="Lloyd C."/>
            <person name="Lloyd D.M."/>
            <person name="Loulseged H."/>
            <person name="Loveland J.E."/>
            <person name="Lovell J.D."/>
            <person name="Lozado R."/>
            <person name="Lu J."/>
            <person name="Lyne R."/>
            <person name="Ma J."/>
            <person name="Maheshwari M."/>
            <person name="Matthews L.H."/>
            <person name="McDowall J."/>
            <person name="McLaren S."/>
            <person name="McMurray A."/>
            <person name="Meidl P."/>
            <person name="Meitinger T."/>
            <person name="Milne S."/>
            <person name="Miner G."/>
            <person name="Mistry S.L."/>
            <person name="Morgan M."/>
            <person name="Morris S."/>
            <person name="Mueller I."/>
            <person name="Mullikin J.C."/>
            <person name="Nguyen N."/>
            <person name="Nordsiek G."/>
            <person name="Nyakatura G."/>
            <person name="O'dell C.N."/>
            <person name="Okwuonu G."/>
            <person name="Palmer S."/>
            <person name="Pandian R."/>
            <person name="Parker D."/>
            <person name="Parrish J."/>
            <person name="Pasternak S."/>
            <person name="Patel D."/>
            <person name="Pearce A.V."/>
            <person name="Pearson D.M."/>
            <person name="Pelan S.E."/>
            <person name="Perez L."/>
            <person name="Porter K.M."/>
            <person name="Ramsey Y."/>
            <person name="Reichwald K."/>
            <person name="Rhodes S."/>
            <person name="Ridler K.A."/>
            <person name="Schlessinger D."/>
            <person name="Schueler M.G."/>
            <person name="Sehra H.K."/>
            <person name="Shaw-Smith C."/>
            <person name="Shen H."/>
            <person name="Sheridan E.M."/>
            <person name="Shownkeen R."/>
            <person name="Skuce C.D."/>
            <person name="Smith M.L."/>
            <person name="Sotheran E.C."/>
            <person name="Steingruber H.E."/>
            <person name="Steward C.A."/>
            <person name="Storey R."/>
            <person name="Swann R.M."/>
            <person name="Swarbreck D."/>
            <person name="Tabor P.E."/>
            <person name="Taudien S."/>
            <person name="Taylor T."/>
            <person name="Teague B."/>
            <person name="Thomas K."/>
            <person name="Thorpe A."/>
            <person name="Timms K."/>
            <person name="Tracey A."/>
            <person name="Trevanion S."/>
            <person name="Tromans A.C."/>
            <person name="d'Urso M."/>
            <person name="Verduzco D."/>
            <person name="Villasana D."/>
            <person name="Waldron L."/>
            <person name="Wall M."/>
            <person name="Wang Q."/>
            <person name="Warren J."/>
            <person name="Warry G.L."/>
            <person name="Wei X."/>
            <person name="West A."/>
            <person name="Whitehead S.L."/>
            <person name="Whiteley M.N."/>
            <person name="Wilkinson J.E."/>
            <person name="Willey D.L."/>
            <person name="Williams G."/>
            <person name="Williams L."/>
            <person name="Williamson A."/>
            <person name="Williamson H."/>
            <person name="Wilming L."/>
            <person name="Woodmansey R.L."/>
            <person name="Wray P.W."/>
            <person name="Yen J."/>
            <person name="Zhang J."/>
            <person name="Zhou J."/>
            <person name="Zoghbi H."/>
            <person name="Zorilla S."/>
            <person name="Buck D."/>
            <person name="Reinhardt R."/>
            <person name="Poustka A."/>
            <person name="Rosenthal A."/>
            <person name="Lehrach H."/>
            <person name="Meindl A."/>
            <person name="Minx P.J."/>
            <person name="Hillier L.W."/>
            <person name="Willard H.F."/>
            <person name="Wilson R.K."/>
            <person name="Waterston R.H."/>
            <person name="Rice C.M."/>
            <person name="Vaudin M."/>
            <person name="Coulson A."/>
            <person name="Nelson D.L."/>
            <person name="Weinstock G."/>
            <person name="Sulston J.E."/>
            <person name="Durbin R.M."/>
            <person name="Hubbard T."/>
            <person name="Gibbs R.A."/>
            <person name="Beck S."/>
            <person name="Rogers J."/>
            <person name="Bentley D.R."/>
        </authorList>
    </citation>
    <scope>NUCLEOTIDE SEQUENCE [LARGE SCALE GENOMIC DNA]</scope>
</reference>
<reference key="4">
    <citation type="journal article" date="2004" name="Genome Res.">
        <title>The status, quality, and expansion of the NIH full-length cDNA project: the Mammalian Gene Collection (MGC).</title>
        <authorList>
            <consortium name="The MGC Project Team"/>
        </authorList>
    </citation>
    <scope>NUCLEOTIDE SEQUENCE [LARGE SCALE MRNA]</scope>
    <scope>VARIANT VAL-420</scope>
    <source>
        <tissue>Uterus</tissue>
    </source>
</reference>
<reference key="5">
    <citation type="journal article" date="2006" name="Cell">
        <title>Global, in vivo, and site-specific phosphorylation dynamics in signaling networks.</title>
        <authorList>
            <person name="Olsen J.V."/>
            <person name="Blagoev B."/>
            <person name="Gnad F."/>
            <person name="Macek B."/>
            <person name="Kumar C."/>
            <person name="Mortensen P."/>
            <person name="Mann M."/>
        </authorList>
    </citation>
    <scope>IDENTIFICATION BY MASS SPECTROMETRY [LARGE SCALE ANALYSIS]</scope>
    <source>
        <tissue>Cervix carcinoma</tissue>
    </source>
</reference>
<reference key="6">
    <citation type="journal article" date="2008" name="J. Proteome Res.">
        <title>Phosphoproteome of resting human platelets.</title>
        <authorList>
            <person name="Zahedi R.P."/>
            <person name="Lewandrowski U."/>
            <person name="Wiesner J."/>
            <person name="Wortelkamp S."/>
            <person name="Moebius J."/>
            <person name="Schuetz C."/>
            <person name="Walter U."/>
            <person name="Gambaryan S."/>
            <person name="Sickmann A."/>
        </authorList>
    </citation>
    <scope>IDENTIFICATION BY MASS SPECTROMETRY [LARGE SCALE ANALYSIS]</scope>
    <source>
        <tissue>Platelet</tissue>
    </source>
</reference>
<reference key="7">
    <citation type="journal article" date="2008" name="Proc. Natl. Acad. Sci. U.S.A.">
        <title>A quantitative atlas of mitotic phosphorylation.</title>
        <authorList>
            <person name="Dephoure N."/>
            <person name="Zhou C."/>
            <person name="Villen J."/>
            <person name="Beausoleil S.A."/>
            <person name="Bakalarski C.E."/>
            <person name="Elledge S.J."/>
            <person name="Gygi S.P."/>
        </authorList>
    </citation>
    <scope>PHOSPHORYLATION [LARGE SCALE ANALYSIS] AT SER-204; SER-217 AND SER-289</scope>
    <scope>IDENTIFICATION BY MASS SPECTROMETRY [LARGE SCALE ANALYSIS]</scope>
    <source>
        <tissue>Cervix carcinoma</tissue>
    </source>
</reference>
<reference key="8">
    <citation type="journal article" date="2013" name="J. Proteome Res.">
        <title>Toward a comprehensive characterization of a human cancer cell phosphoproteome.</title>
        <authorList>
            <person name="Zhou H."/>
            <person name="Di Palma S."/>
            <person name="Preisinger C."/>
            <person name="Peng M."/>
            <person name="Polat A.N."/>
            <person name="Heck A.J."/>
            <person name="Mohammed S."/>
        </authorList>
    </citation>
    <scope>PHOSPHORYLATION [LARGE SCALE ANALYSIS] AT SER-217; SER-221; SER-289 AND SER-488</scope>
    <scope>IDENTIFICATION BY MASS SPECTROMETRY [LARGE SCALE ANALYSIS]</scope>
    <source>
        <tissue>Cervix carcinoma</tissue>
        <tissue>Erythroleukemia</tissue>
    </source>
</reference>
<reference key="9">
    <citation type="journal article" date="2014" name="J. Proteomics">
        <title>An enzyme assisted RP-RPLC approach for in-depth analysis of human liver phosphoproteome.</title>
        <authorList>
            <person name="Bian Y."/>
            <person name="Song C."/>
            <person name="Cheng K."/>
            <person name="Dong M."/>
            <person name="Wang F."/>
            <person name="Huang J."/>
            <person name="Sun D."/>
            <person name="Wang L."/>
            <person name="Ye M."/>
            <person name="Zou H."/>
        </authorList>
    </citation>
    <scope>PHOSPHORYLATION [LARGE SCALE ANALYSIS] AT SER-274</scope>
    <scope>IDENTIFICATION BY MASS SPECTROMETRY [LARGE SCALE ANALYSIS]</scope>
    <source>
        <tissue>Liver</tissue>
    </source>
</reference>
<reference key="10">
    <citation type="submission" date="2005-11" db="PDB data bank">
        <title>Solution structure of the RING domain of the synaptotagmin-like protein 4.</title>
        <authorList>
            <consortium name="RIKEN structural genomics initiative (RSGI)"/>
        </authorList>
    </citation>
    <scope>STRUCTURE BY NMR OF 43-105</scope>
</reference>
<reference key="11">
    <citation type="submission" date="2008-12" db="PDB data bank">
        <title>Crystal structure of a C2 domain from human synaptotagmin-like protein 4.</title>
        <authorList>
            <consortium name="New York structural genomix research consortium (NYSGXRC)"/>
        </authorList>
    </citation>
    <scope>X-RAY CRYSTALLOGRAPHY (2.2 ANGSTROMS) OF 352-488</scope>
</reference>
<keyword id="KW-0002">3D-structure</keyword>
<keyword id="KW-0025">Alternative splicing</keyword>
<keyword id="KW-1003">Cell membrane</keyword>
<keyword id="KW-0968">Cytoplasmic vesicle</keyword>
<keyword id="KW-0472">Membrane</keyword>
<keyword id="KW-0479">Metal-binding</keyword>
<keyword id="KW-0597">Phosphoprotein</keyword>
<keyword id="KW-1267">Proteomics identification</keyword>
<keyword id="KW-1185">Reference proteome</keyword>
<keyword id="KW-0677">Repeat</keyword>
<keyword id="KW-0862">Zinc</keyword>
<keyword id="KW-0863">Zinc-finger</keyword>
<evidence type="ECO:0000250" key="1"/>
<evidence type="ECO:0000250" key="2">
    <source>
        <dbReference type="UniProtKB" id="Q9R0Q1"/>
    </source>
</evidence>
<evidence type="ECO:0000255" key="3">
    <source>
        <dbReference type="PROSITE-ProRule" id="PRU00041"/>
    </source>
</evidence>
<evidence type="ECO:0000255" key="4">
    <source>
        <dbReference type="PROSITE-ProRule" id="PRU00234"/>
    </source>
</evidence>
<evidence type="ECO:0000256" key="5">
    <source>
        <dbReference type="SAM" id="MobiDB-lite"/>
    </source>
</evidence>
<evidence type="ECO:0000269" key="6">
    <source>
    </source>
</evidence>
<evidence type="ECO:0000269" key="7">
    <source>
    </source>
</evidence>
<evidence type="ECO:0000269" key="8">
    <source>
    </source>
</evidence>
<evidence type="ECO:0000303" key="9">
    <source>
    </source>
</evidence>
<evidence type="ECO:0000305" key="10"/>
<evidence type="ECO:0007744" key="11">
    <source>
    </source>
</evidence>
<evidence type="ECO:0007744" key="12">
    <source>
    </source>
</evidence>
<evidence type="ECO:0007744" key="13">
    <source>
    </source>
</evidence>
<evidence type="ECO:0007829" key="14">
    <source>
        <dbReference type="PDB" id="2CSZ"/>
    </source>
</evidence>
<evidence type="ECO:0007829" key="15">
    <source>
        <dbReference type="PDB" id="3FDW"/>
    </source>
</evidence>
<evidence type="ECO:0007829" key="16">
    <source>
        <dbReference type="PDB" id="5X6T"/>
    </source>
</evidence>
<proteinExistence type="evidence at protein level"/>
<comment type="function">
    <text evidence="1">Modulates exocytosis of dense-core granules and secretion of hormones in the pancreas and the pituitary. Interacts with vesicles containing negatively charged phospholipids in a Ca(2+)-independent manner (By similarity).</text>
</comment>
<comment type="subunit">
    <text evidence="1">Part of a ternary complex containing STX1A and RAB27A. Can bind both dominant negative and dominant active mutants of RAB27A. Binds STXBP1, RAB3A, RAB8A and RAB27B. Interacts with MYO5A (By similarity).</text>
</comment>
<comment type="interaction">
    <interactant intactId="EBI-747142">
        <id>Q96C24</id>
    </interactant>
    <interactant intactId="EBI-739624">
        <id>Q8NHQ1</id>
        <label>CEP70</label>
    </interactant>
    <organismsDiffer>false</organismsDiffer>
    <experiments>4</experiments>
</comment>
<comment type="interaction">
    <interactant intactId="EBI-747142">
        <id>Q96C24</id>
    </interactant>
    <interactant intactId="EBI-739789">
        <id>Q92997</id>
        <label>DVL3</label>
    </interactant>
    <organismsDiffer>false</organismsDiffer>
    <experiments>3</experiments>
</comment>
<comment type="interaction">
    <interactant intactId="EBI-747142">
        <id>Q96C24</id>
    </interactant>
    <interactant intactId="EBI-11977403">
        <id>A0A0C3SFZ9</id>
        <label>FCHO1</label>
    </interactant>
    <organismsDiffer>false</organismsDiffer>
    <experiments>3</experiments>
</comment>
<comment type="interaction">
    <interactant intactId="EBI-747142">
        <id>Q96C24</id>
    </interactant>
    <interactant intactId="EBI-740459">
        <id>P51116</id>
        <label>FXR2</label>
    </interactant>
    <organismsDiffer>false</organismsDiffer>
    <experiments>6</experiments>
</comment>
<comment type="interaction">
    <interactant intactId="EBI-747142">
        <id>Q96C24</id>
    </interactant>
    <interactant intactId="EBI-740641">
        <id>Q9NP66</id>
        <label>HMG20A</label>
    </interactant>
    <organismsDiffer>false</organismsDiffer>
    <experiments>7</experiments>
</comment>
<comment type="interaction">
    <interactant intactId="EBI-747142">
        <id>Q96C24</id>
    </interactant>
    <interactant intactId="EBI-14069005">
        <id>Q9BVG8-5</id>
        <label>KIFC3</label>
    </interactant>
    <organismsDiffer>false</organismsDiffer>
    <experiments>3</experiments>
</comment>
<comment type="interaction">
    <interactant intactId="EBI-747142">
        <id>Q96C24</id>
    </interactant>
    <interactant intactId="EBI-8639312">
        <id>P25800</id>
        <label>LMO1</label>
    </interactant>
    <organismsDiffer>false</organismsDiffer>
    <experiments>3</experiments>
</comment>
<comment type="interaction">
    <interactant intactId="EBI-747142">
        <id>Q96C24</id>
    </interactant>
    <interactant intactId="EBI-1216080">
        <id>Q9Y250</id>
        <label>LZTS1</label>
    </interactant>
    <organismsDiffer>false</organismsDiffer>
    <experiments>3</experiments>
</comment>
<comment type="interaction">
    <interactant intactId="EBI-747142">
        <id>Q96C24</id>
    </interactant>
    <interactant intactId="EBI-1051317">
        <id>Q9H4L5</id>
        <label>OSBPL3</label>
    </interactant>
    <organismsDiffer>false</organismsDiffer>
    <experiments>3</experiments>
</comment>
<comment type="interaction">
    <interactant intactId="EBI-747142">
        <id>Q96C24</id>
    </interactant>
    <interactant intactId="EBI-2805516">
        <id>P31321</id>
        <label>PRKAR1B</label>
    </interactant>
    <organismsDiffer>false</organismsDiffer>
    <experiments>3</experiments>
</comment>
<comment type="interaction">
    <interactant intactId="EBI-747142">
        <id>Q96C24</id>
    </interactant>
    <interactant intactId="EBI-716881">
        <id>P51159</id>
        <label>RAB27A</label>
    </interactant>
    <organismsDiffer>false</organismsDiffer>
    <experiments>5</experiments>
</comment>
<comment type="interaction">
    <interactant intactId="EBI-747142">
        <id>Q96C24</id>
    </interactant>
    <interactant intactId="EBI-3386067">
        <id>O95716</id>
        <label>RAB3D</label>
    </interactant>
    <organismsDiffer>false</organismsDiffer>
    <experiments>3</experiments>
</comment>
<comment type="interaction">
    <interactant intactId="EBI-747142">
        <id>Q96C24</id>
    </interactant>
    <interactant intactId="EBI-1378139">
        <id>Q9HAT0</id>
        <label>ROPN1</label>
    </interactant>
    <organismsDiffer>false</organismsDiffer>
    <experiments>3</experiments>
</comment>
<comment type="interaction">
    <interactant intactId="EBI-747142">
        <id>Q96C24</id>
    </interactant>
    <interactant intactId="EBI-12023934">
        <id>Q5MJ10</id>
        <label>SPANXN2</label>
    </interactant>
    <organismsDiffer>false</organismsDiffer>
    <experiments>3</experiments>
</comment>
<comment type="interaction">
    <interactant intactId="EBI-747142">
        <id>Q96C24</id>
    </interactant>
    <interactant intactId="EBI-960169">
        <id>P61764</id>
        <label>STXBP1</label>
    </interactant>
    <organismsDiffer>false</organismsDiffer>
    <experiments>3</experiments>
</comment>
<comment type="interaction">
    <interactant intactId="EBI-747142">
        <id>Q96C24</id>
    </interactant>
    <interactant intactId="EBI-1644036">
        <id>Q86TI0</id>
        <label>TBC1D1</label>
    </interactant>
    <organismsDiffer>false</organismsDiffer>
    <experiments>3</experiments>
</comment>
<comment type="interaction">
    <interactant intactId="EBI-747142">
        <id>Q96C24</id>
    </interactant>
    <interactant intactId="EBI-741602">
        <id>O94972</id>
        <label>TRIM37</label>
    </interactant>
    <organismsDiffer>false</organismsDiffer>
    <experiments>3</experiments>
</comment>
<comment type="interaction">
    <interactant intactId="EBI-747142">
        <id>Q96C24</id>
    </interactant>
    <interactant intactId="EBI-725997">
        <id>Q8WV44</id>
        <label>TRIM41</label>
    </interactant>
    <organismsDiffer>false</organismsDiffer>
    <experiments>3</experiments>
</comment>
<comment type="interaction">
    <interactant intactId="EBI-747142">
        <id>Q96C24</id>
    </interactant>
    <interactant intactId="EBI-740434">
        <id>O15156</id>
        <label>ZBTB7B</label>
    </interactant>
    <organismsDiffer>false</organismsDiffer>
    <experiments>3</experiments>
</comment>
<comment type="interaction">
    <interactant intactId="EBI-747142">
        <id>Q96C24</id>
    </interactant>
    <interactant intactId="EBI-395708">
        <id>Q96C00</id>
        <label>ZBTB9</label>
    </interactant>
    <organismsDiffer>false</organismsDiffer>
    <experiments>3</experiments>
</comment>
<comment type="interaction">
    <interactant intactId="EBI-747142">
        <id>Q96C24</id>
    </interactant>
    <interactant intactId="EBI-527853">
        <id>Q9UGI0</id>
        <label>ZRANB1</label>
    </interactant>
    <organismsDiffer>false</organismsDiffer>
    <experiments>3</experiments>
</comment>
<comment type="subcellular location">
    <subcellularLocation>
        <location evidence="1">Membrane</location>
        <topology evidence="1">Peripheral membrane protein</topology>
    </subcellularLocation>
    <subcellularLocation>
        <location evidence="1">Cell membrane</location>
        <topology evidence="1">Peripheral membrane protein</topology>
    </subcellularLocation>
    <subcellularLocation>
        <location evidence="1">Cytoplasmic vesicle</location>
        <location evidence="1">Secretory vesicle membrane</location>
        <topology evidence="1">Peripheral membrane protein</topology>
    </subcellularLocation>
    <text evidence="1">Detected close to the plasma membrane and on secretory granules. In pancreas, interacts with insulin-containing vesicles (By similarity).</text>
</comment>
<comment type="alternative products">
    <event type="alternative splicing"/>
    <isoform>
        <id>Q96C24-1</id>
        <name>1</name>
        <sequence type="displayed"/>
    </isoform>
    <isoform>
        <id>Q96C24-2</id>
        <name>2</name>
        <sequence type="described" ref="VSP_015237 VSP_015238"/>
    </isoform>
</comment>
<comment type="miscellaneous">
    <molecule>Isoform 2</molecule>
    <text evidence="10">May be due to an intron retention.</text>
</comment>
<gene>
    <name type="primary">SYTL4</name>
</gene>
<feature type="chain" id="PRO_0000190216" description="Synaptotagmin-like protein 4">
    <location>
        <begin position="1"/>
        <end position="671"/>
    </location>
</feature>
<feature type="domain" description="RabBD" evidence="4">
    <location>
        <begin position="4"/>
        <end position="122"/>
    </location>
</feature>
<feature type="domain" description="C2 1" evidence="3">
    <location>
        <begin position="356"/>
        <end position="478"/>
    </location>
</feature>
<feature type="domain" description="C2 2" evidence="3">
    <location>
        <begin position="507"/>
        <end position="633"/>
    </location>
</feature>
<feature type="zinc finger region" description="FYVE-type">
    <location>
        <begin position="63"/>
        <end position="105"/>
    </location>
</feature>
<feature type="region of interest" description="Disordered" evidence="5">
    <location>
        <begin position="199"/>
        <end position="243"/>
    </location>
</feature>
<feature type="modified residue" description="Phosphoserine" evidence="2">
    <location>
        <position position="201"/>
    </location>
</feature>
<feature type="modified residue" description="Phosphoserine" evidence="11">
    <location>
        <position position="204"/>
    </location>
</feature>
<feature type="modified residue" description="Phosphoserine" evidence="11 12">
    <location>
        <position position="217"/>
    </location>
</feature>
<feature type="modified residue" description="Phosphoserine" evidence="12">
    <location>
        <position position="221"/>
    </location>
</feature>
<feature type="modified residue" description="Phosphoserine" evidence="13">
    <location>
        <position position="274"/>
    </location>
</feature>
<feature type="modified residue" description="Phosphoserine" evidence="11 12">
    <location>
        <position position="289"/>
    </location>
</feature>
<feature type="modified residue" description="Phosphoserine" evidence="12">
    <location>
        <position position="488"/>
    </location>
</feature>
<feature type="splice variant" id="VSP_015237" description="In isoform 2." evidence="9">
    <location>
        <begin position="336"/>
        <end position="657"/>
    </location>
</feature>
<feature type="splice variant" id="VSP_015238" description="In isoform 2." evidence="9">
    <original>LQLRSSMAKQKLGL</original>
    <variation>VSSIRSVVTGMLGY</variation>
    <location>
        <begin position="658"/>
        <end position="671"/>
    </location>
</feature>
<feature type="sequence variant" id="VAR_016076" description="In dbSNP:rs2022039." evidence="6 7 8">
    <original>I</original>
    <variation>V</variation>
    <location>
        <position position="420"/>
    </location>
</feature>
<feature type="sequence conflict" description="In Ref. 2; CAI46126." evidence="10" ref="2">
    <original>L</original>
    <variation>P</variation>
    <location>
        <position position="44"/>
    </location>
</feature>
<feature type="sequence conflict" description="In Ref. 1; BAC04287." evidence="10" ref="1">
    <original>T</original>
    <variation>A</variation>
    <location>
        <position position="160"/>
    </location>
</feature>
<feature type="sequence conflict" description="In Ref. 2; CAI46126." evidence="10" ref="2">
    <original>V</original>
    <variation>A</variation>
    <location>
        <position position="251"/>
    </location>
</feature>
<feature type="sequence conflict" description="In Ref. 1; BAC04287." evidence="10" ref="1">
    <original>S</original>
    <variation>G</variation>
    <location>
        <position position="287"/>
    </location>
</feature>
<feature type="strand" evidence="14">
    <location>
        <begin position="64"/>
        <end position="66"/>
    </location>
</feature>
<feature type="strand" evidence="14">
    <location>
        <begin position="71"/>
        <end position="73"/>
    </location>
</feature>
<feature type="turn" evidence="14">
    <location>
        <begin position="75"/>
        <end position="77"/>
    </location>
</feature>
<feature type="strand" evidence="14">
    <location>
        <begin position="78"/>
        <end position="80"/>
    </location>
</feature>
<feature type="turn" evidence="14">
    <location>
        <begin position="81"/>
        <end position="84"/>
    </location>
</feature>
<feature type="strand" evidence="14">
    <location>
        <begin position="91"/>
        <end position="94"/>
    </location>
</feature>
<feature type="strand" evidence="14">
    <location>
        <begin position="100"/>
        <end position="102"/>
    </location>
</feature>
<feature type="turn" evidence="16">
    <location>
        <begin position="103"/>
        <end position="105"/>
    </location>
</feature>
<feature type="strand" evidence="16">
    <location>
        <begin position="106"/>
        <end position="108"/>
    </location>
</feature>
<feature type="strand" evidence="15">
    <location>
        <begin position="359"/>
        <end position="367"/>
    </location>
</feature>
<feature type="turn" evidence="15">
    <location>
        <begin position="368"/>
        <end position="371"/>
    </location>
</feature>
<feature type="strand" evidence="15">
    <location>
        <begin position="372"/>
        <end position="382"/>
    </location>
</feature>
<feature type="turn" evidence="15">
    <location>
        <begin position="388"/>
        <end position="391"/>
    </location>
</feature>
<feature type="strand" evidence="15">
    <location>
        <begin position="395"/>
        <end position="402"/>
    </location>
</feature>
<feature type="helix" evidence="15">
    <location>
        <begin position="407"/>
        <end position="409"/>
    </location>
</feature>
<feature type="strand" evidence="15">
    <location>
        <begin position="410"/>
        <end position="412"/>
    </location>
</feature>
<feature type="strand" evidence="15">
    <location>
        <begin position="423"/>
        <end position="431"/>
    </location>
</feature>
<feature type="helix" evidence="15">
    <location>
        <begin position="437"/>
        <end position="439"/>
    </location>
</feature>
<feature type="strand" evidence="15">
    <location>
        <begin position="441"/>
        <end position="449"/>
    </location>
</feature>
<feature type="helix" evidence="15">
    <location>
        <begin position="451"/>
        <end position="453"/>
    </location>
</feature>
<feature type="strand" evidence="15">
    <location>
        <begin position="455"/>
        <end position="464"/>
    </location>
</feature>
<feature type="helix" evidence="15">
    <location>
        <begin position="465"/>
        <end position="468"/>
    </location>
</feature>
<feature type="turn" evidence="15">
    <location>
        <begin position="469"/>
        <end position="471"/>
    </location>
</feature>
<feature type="strand" evidence="15">
    <location>
        <begin position="474"/>
        <end position="479"/>
    </location>
</feature>
<accession>Q96C24</accession>
<accession>Q5H9J3</accession>
<accession>Q5JPG8</accession>
<accession>Q8N9P4</accession>
<accession>Q9H4R0</accession>
<accession>Q9H4R1</accession>
<sequence>MSELLDLSFLSEEEKDLILSVLQRDEEVRKADEKRIRRLKNELLEIKRKGAKRGSQHYSDRTCARCQESLGRLSPKTNTCRGCNHLVCRDCRIQESNGTWRCKVCAKEIELKKATGDWFYDQKVNRFAYRTGSEIIRMSLRHKPAVSKRETVGQSLLHQTQMGDIWPGRKIIQERQKEPSVLFEVPKLKSGKSALEAESESLDSFTADSDSTSRRDSLDKSGLFPEWKKMSAPKSQVEKETQPGGQNVVFVDEGEMIFKKNTRKILRPSEYTKSVIDLRPEDVVHESGSLGDRSKSVPGLNVDMEEEEEEEDIDHLVKLHRQKLARSSMQSGSSMSTIGSMMSIYSEAGDFGNIFVTGRIAFSLKYEQQTQSLVVHVKECHQLAYADEAKKRSNPYVKTYLLPDKSRQGKRKTSIKRDTINPLYDETLRYEIPESLLAQRTLQFSVWHHGRFGRNTFLGEAEIQMDSWKLDKKLDHCLPLHGKISAESPTGLPSHKGELVVSLKYIPASKTPVGGDRKKSKGGEGGELQVWIKEAKNLTAAKAGGTSDSFVKGYLLPMRNKASKRKTPVMKKTLNPHYNHTFVYNGVRLEDLQHMCLELTVWDREPLASNDFLGGVRLGVGTGISNGEVVDWMDSTGEEVSLWQKMRQYPGSWAEGTLQLRSSMAKQKLGL</sequence>
<name>SYTL4_HUMAN</name>
<dbReference type="EMBL" id="AK094110">
    <property type="protein sequence ID" value="BAC04287.1"/>
    <property type="molecule type" value="mRNA"/>
</dbReference>
<dbReference type="EMBL" id="BX537410">
    <property type="protein sequence ID" value="CAD97652.1"/>
    <property type="molecule type" value="mRNA"/>
</dbReference>
<dbReference type="EMBL" id="AL832596">
    <property type="protein sequence ID" value="CAI46126.1"/>
    <property type="molecule type" value="mRNA"/>
</dbReference>
<dbReference type="EMBL" id="BC014913">
    <property type="protein sequence ID" value="AAH14913.1"/>
    <property type="molecule type" value="mRNA"/>
</dbReference>
<dbReference type="EMBL" id="Z73900">
    <property type="protein sequence ID" value="CAI42004.1"/>
    <property type="molecule type" value="Genomic_DNA"/>
</dbReference>
<dbReference type="EMBL" id="AL391688">
    <property type="protein sequence ID" value="CAI42004.1"/>
    <property type="status" value="JOINED"/>
    <property type="molecule type" value="Genomic_DNA"/>
</dbReference>
<dbReference type="EMBL" id="Z73900">
    <property type="protein sequence ID" value="CAI42005.1"/>
    <property type="molecule type" value="Genomic_DNA"/>
</dbReference>
<dbReference type="EMBL" id="AL391688">
    <property type="protein sequence ID" value="CAI42005.1"/>
    <property type="status" value="JOINED"/>
    <property type="molecule type" value="Genomic_DNA"/>
</dbReference>
<dbReference type="CCDS" id="CCDS14472.1">
    <molecule id="Q96C24-1"/>
</dbReference>
<dbReference type="RefSeq" id="NP_001123368.1">
    <molecule id="Q96C24-1"/>
    <property type="nucleotide sequence ID" value="NM_001129896.3"/>
</dbReference>
<dbReference type="RefSeq" id="NP_001167539.1">
    <molecule id="Q96C24-1"/>
    <property type="nucleotide sequence ID" value="NM_001174068.2"/>
</dbReference>
<dbReference type="RefSeq" id="NP_001357089.1">
    <molecule id="Q96C24-1"/>
    <property type="nucleotide sequence ID" value="NM_001370160.1"/>
</dbReference>
<dbReference type="RefSeq" id="NP_001357090.1">
    <molecule id="Q96C24-1"/>
    <property type="nucleotide sequence ID" value="NM_001370161.1"/>
</dbReference>
<dbReference type="RefSeq" id="NP_001357092.1">
    <molecule id="Q96C24-1"/>
    <property type="nucleotide sequence ID" value="NM_001370163.1"/>
</dbReference>
<dbReference type="RefSeq" id="NP_001357093.1">
    <molecule id="Q96C24-1"/>
    <property type="nucleotide sequence ID" value="NM_001370164.1"/>
</dbReference>
<dbReference type="RefSeq" id="NP_001357094.1">
    <molecule id="Q96C24-1"/>
    <property type="nucleotide sequence ID" value="NM_001370165.1"/>
</dbReference>
<dbReference type="RefSeq" id="NP_001357095.1">
    <molecule id="Q96C24-1"/>
    <property type="nucleotide sequence ID" value="NM_001370166.1"/>
</dbReference>
<dbReference type="RefSeq" id="NP_001357096.1">
    <molecule id="Q96C24-1"/>
    <property type="nucleotide sequence ID" value="NM_001370167.1"/>
</dbReference>
<dbReference type="RefSeq" id="NP_001357097.1">
    <molecule id="Q96C24-1"/>
    <property type="nucleotide sequence ID" value="NM_001370168.1"/>
</dbReference>
<dbReference type="RefSeq" id="NP_001357098.1">
    <molecule id="Q96C24-1"/>
    <property type="nucleotide sequence ID" value="NM_001370169.1"/>
</dbReference>
<dbReference type="RefSeq" id="NP_542775.2">
    <molecule id="Q96C24-1"/>
    <property type="nucleotide sequence ID" value="NM_080737.3"/>
</dbReference>
<dbReference type="RefSeq" id="XP_005262286.1">
    <property type="nucleotide sequence ID" value="XM_005262229.2"/>
</dbReference>
<dbReference type="RefSeq" id="XP_011529370.1">
    <property type="nucleotide sequence ID" value="XM_011531068.2"/>
</dbReference>
<dbReference type="RefSeq" id="XP_016885460.1">
    <property type="nucleotide sequence ID" value="XM_017029971.1"/>
</dbReference>
<dbReference type="RefSeq" id="XP_047298607.1">
    <molecule id="Q96C24-1"/>
    <property type="nucleotide sequence ID" value="XM_047442651.1"/>
</dbReference>
<dbReference type="PDB" id="2CSZ">
    <property type="method" value="NMR"/>
    <property type="chains" value="A=43-105"/>
</dbReference>
<dbReference type="PDB" id="3FDW">
    <property type="method" value="X-ray"/>
    <property type="resolution" value="2.20 A"/>
    <property type="chains" value="A/B=352-488"/>
</dbReference>
<dbReference type="PDB" id="5X6T">
    <property type="method" value="NMR"/>
    <property type="chains" value="A=59-111"/>
</dbReference>
<dbReference type="PDBsum" id="2CSZ"/>
<dbReference type="PDBsum" id="3FDW"/>
<dbReference type="PDBsum" id="5X6T"/>
<dbReference type="BMRB" id="Q96C24"/>
<dbReference type="SMR" id="Q96C24"/>
<dbReference type="BioGRID" id="125120">
    <property type="interactions" value="69"/>
</dbReference>
<dbReference type="CORUM" id="Q96C24"/>
<dbReference type="FunCoup" id="Q96C24">
    <property type="interactions" value="541"/>
</dbReference>
<dbReference type="IntAct" id="Q96C24">
    <property type="interactions" value="38"/>
</dbReference>
<dbReference type="MINT" id="Q96C24"/>
<dbReference type="STRING" id="9606.ENSP00000362080"/>
<dbReference type="TCDB" id="9.A.57.1.8">
    <property type="family name" value="the extended-synaptotagmin (e-syt) family"/>
</dbReference>
<dbReference type="iPTMnet" id="Q96C24"/>
<dbReference type="PhosphoSitePlus" id="Q96C24"/>
<dbReference type="BioMuta" id="SYTL4"/>
<dbReference type="DMDM" id="317373281"/>
<dbReference type="jPOST" id="Q96C24"/>
<dbReference type="MassIVE" id="Q96C24"/>
<dbReference type="PaxDb" id="9606-ENSP00000362080"/>
<dbReference type="PeptideAtlas" id="Q96C24"/>
<dbReference type="ProteomicsDB" id="76152">
    <molecule id="Q96C24-1"/>
</dbReference>
<dbReference type="ProteomicsDB" id="76153">
    <molecule id="Q96C24-2"/>
</dbReference>
<dbReference type="Pumba" id="Q96C24"/>
<dbReference type="Antibodypedia" id="28523">
    <property type="antibodies" value="182 antibodies from 23 providers"/>
</dbReference>
<dbReference type="DNASU" id="94121"/>
<dbReference type="Ensembl" id="ENST00000263033.9">
    <molecule id="Q96C24-1"/>
    <property type="protein sequence ID" value="ENSP00000263033.5"/>
    <property type="gene ID" value="ENSG00000102362.16"/>
</dbReference>
<dbReference type="Ensembl" id="ENST00000276141.10">
    <molecule id="Q96C24-1"/>
    <property type="protein sequence ID" value="ENSP00000276141.6"/>
    <property type="gene ID" value="ENSG00000102362.16"/>
</dbReference>
<dbReference type="Ensembl" id="ENST00000372981.1">
    <molecule id="Q96C24-2"/>
    <property type="protein sequence ID" value="ENSP00000362072.1"/>
    <property type="gene ID" value="ENSG00000102362.16"/>
</dbReference>
<dbReference type="Ensembl" id="ENST00000372989.6">
    <molecule id="Q96C24-1"/>
    <property type="protein sequence ID" value="ENSP00000362080.1"/>
    <property type="gene ID" value="ENSG00000102362.16"/>
</dbReference>
<dbReference type="Ensembl" id="ENST00000685623.1">
    <molecule id="Q96C24-1"/>
    <property type="protein sequence ID" value="ENSP00000509693.1"/>
    <property type="gene ID" value="ENSG00000102362.16"/>
</dbReference>
<dbReference type="GeneID" id="94121"/>
<dbReference type="KEGG" id="hsa:94121"/>
<dbReference type="MANE-Select" id="ENST00000372989.6">
    <property type="protein sequence ID" value="ENSP00000362080.1"/>
    <property type="RefSeq nucleotide sequence ID" value="NM_001370165.1"/>
    <property type="RefSeq protein sequence ID" value="NP_001357094.1"/>
</dbReference>
<dbReference type="UCSC" id="uc004egd.6">
    <molecule id="Q96C24-1"/>
    <property type="organism name" value="human"/>
</dbReference>
<dbReference type="AGR" id="HGNC:15588"/>
<dbReference type="CTD" id="94121"/>
<dbReference type="DisGeNET" id="94121"/>
<dbReference type="GeneCards" id="SYTL4"/>
<dbReference type="HGNC" id="HGNC:15588">
    <property type="gene designation" value="SYTL4"/>
</dbReference>
<dbReference type="HPA" id="ENSG00000102362">
    <property type="expression patterns" value="Tissue enhanced (endometrium, ovary)"/>
</dbReference>
<dbReference type="MalaCards" id="SYTL4"/>
<dbReference type="MIM" id="300723">
    <property type="type" value="gene"/>
</dbReference>
<dbReference type="neXtProt" id="NX_Q96C24"/>
<dbReference type="OpenTargets" id="ENSG00000102362"/>
<dbReference type="PharmGKB" id="PA37987"/>
<dbReference type="VEuPathDB" id="HostDB:ENSG00000102362"/>
<dbReference type="eggNOG" id="KOG1028">
    <property type="taxonomic scope" value="Eukaryota"/>
</dbReference>
<dbReference type="GeneTree" id="ENSGT00940000159060"/>
<dbReference type="HOGENOM" id="CLU_002711_5_0_1"/>
<dbReference type="InParanoid" id="Q96C24"/>
<dbReference type="OMA" id="YIPSAKH"/>
<dbReference type="OrthoDB" id="195679at2759"/>
<dbReference type="PAN-GO" id="Q96C24">
    <property type="GO annotations" value="4 GO annotations based on evolutionary models"/>
</dbReference>
<dbReference type="PhylomeDB" id="Q96C24"/>
<dbReference type="TreeFam" id="TF341184"/>
<dbReference type="PathwayCommons" id="Q96C24"/>
<dbReference type="Reactome" id="R-HSA-114608">
    <property type="pathway name" value="Platelet degranulation"/>
</dbReference>
<dbReference type="SignaLink" id="Q96C24"/>
<dbReference type="BioGRID-ORCS" id="94121">
    <property type="hits" value="12 hits in 791 CRISPR screens"/>
</dbReference>
<dbReference type="ChiTaRS" id="SYTL4">
    <property type="organism name" value="human"/>
</dbReference>
<dbReference type="EvolutionaryTrace" id="Q96C24"/>
<dbReference type="GeneWiki" id="SYTL4"/>
<dbReference type="GenomeRNAi" id="94121"/>
<dbReference type="Pharos" id="Q96C24">
    <property type="development level" value="Tbio"/>
</dbReference>
<dbReference type="PRO" id="PR:Q96C24"/>
<dbReference type="Proteomes" id="UP000005640">
    <property type="component" value="Chromosome X"/>
</dbReference>
<dbReference type="RNAct" id="Q96C24">
    <property type="molecule type" value="protein"/>
</dbReference>
<dbReference type="Bgee" id="ENSG00000102362">
    <property type="expression patterns" value="Expressed in left ovary and 154 other cell types or tissues"/>
</dbReference>
<dbReference type="ExpressionAtlas" id="Q96C24">
    <property type="expression patterns" value="baseline and differential"/>
</dbReference>
<dbReference type="GO" id="GO:0005768">
    <property type="term" value="C:endosome"/>
    <property type="evidence" value="ECO:0000314"/>
    <property type="project" value="UniProtKB"/>
</dbReference>
<dbReference type="GO" id="GO:0070382">
    <property type="term" value="C:exocytic vesicle"/>
    <property type="evidence" value="ECO:0000318"/>
    <property type="project" value="GO_Central"/>
</dbReference>
<dbReference type="GO" id="GO:0005886">
    <property type="term" value="C:plasma membrane"/>
    <property type="evidence" value="ECO:0000250"/>
    <property type="project" value="UniProtKB"/>
</dbReference>
<dbReference type="GO" id="GO:0031092">
    <property type="term" value="C:platelet alpha granule membrane"/>
    <property type="evidence" value="ECO:0000304"/>
    <property type="project" value="Reactome"/>
</dbReference>
<dbReference type="GO" id="GO:0030658">
    <property type="term" value="C:transport vesicle membrane"/>
    <property type="evidence" value="ECO:0007669"/>
    <property type="project" value="UniProtKB-SubCell"/>
</dbReference>
<dbReference type="GO" id="GO:0042043">
    <property type="term" value="F:neurexin family protein binding"/>
    <property type="evidence" value="ECO:0000250"/>
    <property type="project" value="UniProtKB"/>
</dbReference>
<dbReference type="GO" id="GO:0005543">
    <property type="term" value="F:phospholipid binding"/>
    <property type="evidence" value="ECO:0000250"/>
    <property type="project" value="UniProtKB"/>
</dbReference>
<dbReference type="GO" id="GO:0031267">
    <property type="term" value="F:small GTPase binding"/>
    <property type="evidence" value="ECO:0007669"/>
    <property type="project" value="InterPro"/>
</dbReference>
<dbReference type="GO" id="GO:0008270">
    <property type="term" value="F:zinc ion binding"/>
    <property type="evidence" value="ECO:0007669"/>
    <property type="project" value="UniProtKB-KW"/>
</dbReference>
<dbReference type="GO" id="GO:0006887">
    <property type="term" value="P:exocytosis"/>
    <property type="evidence" value="ECO:0000318"/>
    <property type="project" value="GO_Central"/>
</dbReference>
<dbReference type="GO" id="GO:0030073">
    <property type="term" value="P:insulin secretion"/>
    <property type="evidence" value="ECO:0007669"/>
    <property type="project" value="Ensembl"/>
</dbReference>
<dbReference type="GO" id="GO:0006886">
    <property type="term" value="P:intracellular protein transport"/>
    <property type="evidence" value="ECO:0007669"/>
    <property type="project" value="InterPro"/>
</dbReference>
<dbReference type="GO" id="GO:0032418">
    <property type="term" value="P:lysosome localization"/>
    <property type="evidence" value="ECO:0000315"/>
    <property type="project" value="UniProtKB"/>
</dbReference>
<dbReference type="GO" id="GO:0071985">
    <property type="term" value="P:multivesicular body sorting pathway"/>
    <property type="evidence" value="ECO:0000315"/>
    <property type="project" value="UniProtKB"/>
</dbReference>
<dbReference type="GO" id="GO:0046676">
    <property type="term" value="P:negative regulation of insulin secretion"/>
    <property type="evidence" value="ECO:0007669"/>
    <property type="project" value="Ensembl"/>
</dbReference>
<dbReference type="GO" id="GO:0001778">
    <property type="term" value="P:plasma membrane repair"/>
    <property type="evidence" value="ECO:0000314"/>
    <property type="project" value="UniProtKB"/>
</dbReference>
<dbReference type="GO" id="GO:0045921">
    <property type="term" value="P:positive regulation of exocytosis"/>
    <property type="evidence" value="ECO:0000315"/>
    <property type="project" value="UniProtKB"/>
</dbReference>
<dbReference type="GO" id="GO:0050714">
    <property type="term" value="P:positive regulation of protein secretion"/>
    <property type="evidence" value="ECO:0000315"/>
    <property type="project" value="UniProtKB"/>
</dbReference>
<dbReference type="GO" id="GO:1905684">
    <property type="term" value="P:regulation of plasma membrane repair"/>
    <property type="evidence" value="ECO:0000315"/>
    <property type="project" value="UniProtKB"/>
</dbReference>
<dbReference type="CDD" id="cd04029">
    <property type="entry name" value="C2A_SLP-4_5"/>
    <property type="match status" value="1"/>
</dbReference>
<dbReference type="CDD" id="cd04020">
    <property type="entry name" value="C2B_SLP_1-2-3-4"/>
    <property type="match status" value="1"/>
</dbReference>
<dbReference type="CDD" id="cd15764">
    <property type="entry name" value="FYVE_Slp4"/>
    <property type="match status" value="1"/>
</dbReference>
<dbReference type="FunFam" id="2.60.40.150:FF:000121">
    <property type="entry name" value="Synaptotagmin-like 4, isoform CRA_a"/>
    <property type="match status" value="1"/>
</dbReference>
<dbReference type="FunFam" id="2.60.40.150:FF:000006">
    <property type="entry name" value="Synaptotagmin-like 5, isoform CRA_a"/>
    <property type="match status" value="1"/>
</dbReference>
<dbReference type="FunFam" id="3.30.40.10:FF:000018">
    <property type="entry name" value="Synaptotagmin-like 5, isoform CRA_a"/>
    <property type="match status" value="1"/>
</dbReference>
<dbReference type="Gene3D" id="2.60.40.150">
    <property type="entry name" value="C2 domain"/>
    <property type="match status" value="2"/>
</dbReference>
<dbReference type="Gene3D" id="3.30.40.10">
    <property type="entry name" value="Zinc/RING finger domain, C3HC4 (zinc finger)"/>
    <property type="match status" value="1"/>
</dbReference>
<dbReference type="InterPro" id="IPR000008">
    <property type="entry name" value="C2_dom"/>
</dbReference>
<dbReference type="InterPro" id="IPR035892">
    <property type="entry name" value="C2_domain_sf"/>
</dbReference>
<dbReference type="InterPro" id="IPR041282">
    <property type="entry name" value="FYVE_2"/>
</dbReference>
<dbReference type="InterPro" id="IPR044134">
    <property type="entry name" value="FYVE_Slp4"/>
</dbReference>
<dbReference type="InterPro" id="IPR010911">
    <property type="entry name" value="Rab_BD"/>
</dbReference>
<dbReference type="InterPro" id="IPR037303">
    <property type="entry name" value="SLP-4/5_C2A"/>
</dbReference>
<dbReference type="InterPro" id="IPR001565">
    <property type="entry name" value="Synaptotagmin"/>
</dbReference>
<dbReference type="InterPro" id="IPR043567">
    <property type="entry name" value="SYTL1-5_C2B"/>
</dbReference>
<dbReference type="InterPro" id="IPR011011">
    <property type="entry name" value="Znf_FYVE_PHD"/>
</dbReference>
<dbReference type="InterPro" id="IPR013083">
    <property type="entry name" value="Znf_RING/FYVE/PHD"/>
</dbReference>
<dbReference type="PANTHER" id="PTHR45716">
    <property type="entry name" value="BITESIZE, ISOFORM I"/>
    <property type="match status" value="1"/>
</dbReference>
<dbReference type="PANTHER" id="PTHR45716:SF4">
    <property type="entry name" value="SYNAPTOTAGMIN-LIKE PROTEIN 4"/>
    <property type="match status" value="1"/>
</dbReference>
<dbReference type="Pfam" id="PF00168">
    <property type="entry name" value="C2"/>
    <property type="match status" value="2"/>
</dbReference>
<dbReference type="Pfam" id="PF02318">
    <property type="entry name" value="FYVE_2"/>
    <property type="match status" value="1"/>
</dbReference>
<dbReference type="PRINTS" id="PR00399">
    <property type="entry name" value="SYNAPTOTAGMN"/>
</dbReference>
<dbReference type="SMART" id="SM00239">
    <property type="entry name" value="C2"/>
    <property type="match status" value="2"/>
</dbReference>
<dbReference type="SUPFAM" id="SSF49562">
    <property type="entry name" value="C2 domain (Calcium/lipid-binding domain, CaLB)"/>
    <property type="match status" value="2"/>
</dbReference>
<dbReference type="SUPFAM" id="SSF57903">
    <property type="entry name" value="FYVE/PHD zinc finger"/>
    <property type="match status" value="1"/>
</dbReference>
<dbReference type="PROSITE" id="PS50004">
    <property type="entry name" value="C2"/>
    <property type="match status" value="2"/>
</dbReference>
<dbReference type="PROSITE" id="PS50916">
    <property type="entry name" value="RABBD"/>
    <property type="match status" value="1"/>
</dbReference>
<organism>
    <name type="scientific">Homo sapiens</name>
    <name type="common">Human</name>
    <dbReference type="NCBI Taxonomy" id="9606"/>
    <lineage>
        <taxon>Eukaryota</taxon>
        <taxon>Metazoa</taxon>
        <taxon>Chordata</taxon>
        <taxon>Craniata</taxon>
        <taxon>Vertebrata</taxon>
        <taxon>Euteleostomi</taxon>
        <taxon>Mammalia</taxon>
        <taxon>Eutheria</taxon>
        <taxon>Euarchontoglires</taxon>
        <taxon>Primates</taxon>
        <taxon>Haplorrhini</taxon>
        <taxon>Catarrhini</taxon>
        <taxon>Hominidae</taxon>
        <taxon>Homo</taxon>
    </lineage>
</organism>